<organism>
    <name type="scientific">Mus musculus</name>
    <name type="common">Mouse</name>
    <dbReference type="NCBI Taxonomy" id="10090"/>
    <lineage>
        <taxon>Eukaryota</taxon>
        <taxon>Metazoa</taxon>
        <taxon>Chordata</taxon>
        <taxon>Craniata</taxon>
        <taxon>Vertebrata</taxon>
        <taxon>Euteleostomi</taxon>
        <taxon>Mammalia</taxon>
        <taxon>Eutheria</taxon>
        <taxon>Euarchontoglires</taxon>
        <taxon>Glires</taxon>
        <taxon>Rodentia</taxon>
        <taxon>Myomorpha</taxon>
        <taxon>Muroidea</taxon>
        <taxon>Muridae</taxon>
        <taxon>Murinae</taxon>
        <taxon>Mus</taxon>
        <taxon>Mus</taxon>
    </lineage>
</organism>
<comment type="similarity">
    <text evidence="2">Belongs to the HAD-like hydrolase superfamily.</text>
</comment>
<gene>
    <name evidence="3" type="primary">Hdhd5</name>
    <name evidence="3" type="synonym">Cecr5</name>
</gene>
<dbReference type="EMBL" id="BC014705">
    <property type="protein sequence ID" value="AAH14705.1"/>
    <property type="molecule type" value="mRNA"/>
</dbReference>
<dbReference type="CCDS" id="CCDS20483.1"/>
<dbReference type="RefSeq" id="NP_659064.1">
    <property type="nucleotide sequence ID" value="NM_144815.2"/>
</dbReference>
<dbReference type="SMR" id="Q91WM2"/>
<dbReference type="BioGRID" id="229577">
    <property type="interactions" value="1"/>
</dbReference>
<dbReference type="FunCoup" id="Q91WM2">
    <property type="interactions" value="1282"/>
</dbReference>
<dbReference type="STRING" id="10090.ENSMUSP00000074775"/>
<dbReference type="iPTMnet" id="Q91WM2"/>
<dbReference type="PhosphoSitePlus" id="Q91WM2"/>
<dbReference type="SwissPalm" id="Q91WM2"/>
<dbReference type="REPRODUCTION-2DPAGE" id="Q91WM2"/>
<dbReference type="jPOST" id="Q91WM2"/>
<dbReference type="PaxDb" id="10090-ENSMUSP00000074775"/>
<dbReference type="PeptideAtlas" id="Q91WM2"/>
<dbReference type="ProteomicsDB" id="269654"/>
<dbReference type="Pumba" id="Q91WM2"/>
<dbReference type="Antibodypedia" id="257">
    <property type="antibodies" value="120 antibodies from 20 providers"/>
</dbReference>
<dbReference type="Ensembl" id="ENSMUST00000075303.7">
    <property type="protein sequence ID" value="ENSMUSP00000074775.7"/>
    <property type="gene ID" value="ENSMUSG00000058979.8"/>
</dbReference>
<dbReference type="GeneID" id="214932"/>
<dbReference type="KEGG" id="mmu:214932"/>
<dbReference type="UCSC" id="uc009dnl.1">
    <property type="organism name" value="mouse"/>
</dbReference>
<dbReference type="AGR" id="MGI:2136976"/>
<dbReference type="CTD" id="27440"/>
<dbReference type="MGI" id="MGI:2136976">
    <property type="gene designation" value="Hdhd5"/>
</dbReference>
<dbReference type="VEuPathDB" id="HostDB:ENSMUSG00000058979"/>
<dbReference type="eggNOG" id="KOG1618">
    <property type="taxonomic scope" value="Eukaryota"/>
</dbReference>
<dbReference type="GeneTree" id="ENSGT00390000018051"/>
<dbReference type="HOGENOM" id="CLU_030880_0_1_1"/>
<dbReference type="InParanoid" id="Q91WM2"/>
<dbReference type="OMA" id="HDKRMLV"/>
<dbReference type="OrthoDB" id="10251048at2759"/>
<dbReference type="PhylomeDB" id="Q91WM2"/>
<dbReference type="TreeFam" id="TF313681"/>
<dbReference type="BioGRID-ORCS" id="214932">
    <property type="hits" value="1 hit in 78 CRISPR screens"/>
</dbReference>
<dbReference type="PRO" id="PR:Q91WM2"/>
<dbReference type="Proteomes" id="UP000000589">
    <property type="component" value="Chromosome 6"/>
</dbReference>
<dbReference type="RNAct" id="Q91WM2">
    <property type="molecule type" value="protein"/>
</dbReference>
<dbReference type="Bgee" id="ENSMUSG00000058979">
    <property type="expression patterns" value="Expressed in interventricular septum and 118 other cell types or tissues"/>
</dbReference>
<dbReference type="GO" id="GO:0005739">
    <property type="term" value="C:mitochondrion"/>
    <property type="evidence" value="ECO:0007005"/>
    <property type="project" value="MGI"/>
</dbReference>
<dbReference type="CDD" id="cd07511">
    <property type="entry name" value="HAD_like"/>
    <property type="match status" value="1"/>
</dbReference>
<dbReference type="FunFam" id="3.40.50.1000:FF:000081">
    <property type="entry name" value="Haloacid dehalogenase like hydrolase domain containing 5"/>
    <property type="match status" value="1"/>
</dbReference>
<dbReference type="Gene3D" id="3.40.50.1000">
    <property type="entry name" value="HAD superfamily/HAD-like"/>
    <property type="match status" value="2"/>
</dbReference>
<dbReference type="InterPro" id="IPR050324">
    <property type="entry name" value="CDP-alcohol_PTase-I"/>
</dbReference>
<dbReference type="InterPro" id="IPR036412">
    <property type="entry name" value="HAD-like_sf"/>
</dbReference>
<dbReference type="InterPro" id="IPR006357">
    <property type="entry name" value="HAD-SF_hydro_IIA"/>
</dbReference>
<dbReference type="InterPro" id="IPR006353">
    <property type="entry name" value="HAD-SF_hydro_IIA_CECR5"/>
</dbReference>
<dbReference type="InterPro" id="IPR023214">
    <property type="entry name" value="HAD_sf"/>
</dbReference>
<dbReference type="NCBIfam" id="TIGR01456">
    <property type="entry name" value="CECR5"/>
    <property type="match status" value="1"/>
</dbReference>
<dbReference type="NCBIfam" id="TIGR01460">
    <property type="entry name" value="HAD-SF-IIA"/>
    <property type="match status" value="1"/>
</dbReference>
<dbReference type="PANTHER" id="PTHR14269">
    <property type="entry name" value="CDP-DIACYLGLYCEROL--GLYCEROL-3-PHOSPHATE 3-PHOSPHATIDYLTRANSFERASE-RELATED"/>
    <property type="match status" value="1"/>
</dbReference>
<dbReference type="PANTHER" id="PTHR14269:SF17">
    <property type="entry name" value="HALOACID DEHALOGENASE-LIKE HYDROLASE DOMAIN-CONTAINING 5"/>
    <property type="match status" value="1"/>
</dbReference>
<dbReference type="Pfam" id="PF13344">
    <property type="entry name" value="Hydrolase_6"/>
    <property type="match status" value="1"/>
</dbReference>
<dbReference type="SUPFAM" id="SSF56784">
    <property type="entry name" value="HAD-like"/>
    <property type="match status" value="1"/>
</dbReference>
<keyword id="KW-1185">Reference proteome</keyword>
<keyword id="KW-0732">Signal</keyword>
<name>HDHD5_MOUSE</name>
<reference key="1">
    <citation type="journal article" date="2004" name="Genome Res.">
        <title>The status, quality, and expansion of the NIH full-length cDNA project: the Mammalian Gene Collection (MGC).</title>
        <authorList>
            <consortium name="The MGC Project Team"/>
        </authorList>
    </citation>
    <scope>NUCLEOTIDE SEQUENCE [LARGE SCALE MRNA]</scope>
    <source>
        <tissue>Kidney</tissue>
    </source>
</reference>
<reference key="2">
    <citation type="journal article" date="2010" name="Cell">
        <title>A tissue-specific atlas of mouse protein phosphorylation and expression.</title>
        <authorList>
            <person name="Huttlin E.L."/>
            <person name="Jedrychowski M.P."/>
            <person name="Elias J.E."/>
            <person name="Goswami T."/>
            <person name="Rad R."/>
            <person name="Beausoleil S.A."/>
            <person name="Villen J."/>
            <person name="Haas W."/>
            <person name="Sowa M.E."/>
            <person name="Gygi S.P."/>
        </authorList>
    </citation>
    <scope>IDENTIFICATION BY MASS SPECTROMETRY [LARGE SCALE ANALYSIS]</scope>
    <source>
        <tissue>Brown adipose tissue</tissue>
        <tissue>Heart</tissue>
        <tissue>Kidney</tissue>
        <tissue>Liver</tissue>
        <tissue>Pancreas</tissue>
        <tissue>Spleen</tissue>
        <tissue>Testis</tissue>
    </source>
</reference>
<sequence length="419" mass="46306">MAALAGLGVLGAGRHLWKLPVRLSAGLQGCGPRRGYIAGSAERSPTFGLLFDIDGVLVRGHRVIPAALEAFSKLVNSQGQLRVPVVFVTNAGNILQHNKAQELSDLLRCKVDPDQVILSHSPMKLFLQYHSKQMLVSGQGPLVENARALGFQNVVTIDELRLAFPELDMVDLQRRPKTMRLRSDFPAIEGVLLLGEPVRWETNLQLIMDVLLSNGHPGTGLATAPYPHLPVLASNMDLLWMAEAKMPRFGHGTFLLCLETIYRKITGNELKYEGLMGKPSILTYQYAEDVIRQQAERRGWAAPIRKLYAIGDNPMSDVYGANLFHQYLQMANRGEEEQQTGGQQKQRPSATQSCASILVCTGIYSSQDPGSQVPPPGRRELPFHGHRDFSFSPGLLEASHIVHDVNEAVQLVFHQEGWA</sequence>
<protein>
    <recommendedName>
        <fullName evidence="3">Haloacid dehalogenase-like hydrolase domain-containing 5</fullName>
    </recommendedName>
    <alternativeName>
        <fullName evidence="2">Cat eye syndrome critical region protein 5 homolog</fullName>
    </alternativeName>
</protein>
<accession>Q91WM2</accession>
<evidence type="ECO:0000255" key="1"/>
<evidence type="ECO:0000305" key="2"/>
<evidence type="ECO:0000312" key="3">
    <source>
        <dbReference type="MGI" id="MGI:2136976"/>
    </source>
</evidence>
<proteinExistence type="evidence at protein level"/>
<feature type="signal peptide" evidence="1">
    <location>
        <begin position="1"/>
        <end position="15"/>
    </location>
</feature>
<feature type="chain" id="PRO_0000020921" description="Haloacid dehalogenase-like hydrolase domain-containing 5">
    <location>
        <begin position="16"/>
        <end position="419"/>
    </location>
</feature>